<name>OR1N1_HUMAN</name>
<sequence>MENQSSISEFFLRGISAPPEQQQSLFGIFLCMYLVTLTGNLLIILAIGSDLHLHTPMYFFLANLSFVDMGLTSSTVTKMLVNIQTRHHTISYTGCLTQMYFFLMFGDLDSFFLAAMAYDRYVAICHPLCYSTVMRPQVCALMLALCWVLTNIVALTHTFLMARLSFCVTGEIAHFFCDITPVLKLSCSDTHINEMMVFVLGGTVLIVPFLCIVTSYIHIVPAILRVRTRGGVGKAFSTCSSHLCVVCVFYGTLFSAYLCPPSIASEEKDIAAAAMYTIVTPMLNPFIYSLRNKDMKGALKRLFSHRSIVSS</sequence>
<proteinExistence type="inferred from homology"/>
<dbReference type="EMBL" id="AB065719">
    <property type="protein sequence ID" value="BAC05940.1"/>
    <property type="molecule type" value="Genomic_DNA"/>
</dbReference>
<dbReference type="EMBL" id="AL359636">
    <property type="status" value="NOT_ANNOTATED_CDS"/>
    <property type="molecule type" value="Genomic_DNA"/>
</dbReference>
<dbReference type="EMBL" id="CH471090">
    <property type="protein sequence ID" value="EAW87534.1"/>
    <property type="molecule type" value="Genomic_DNA"/>
</dbReference>
<dbReference type="EMBL" id="U86216">
    <property type="protein sequence ID" value="AAC39612.1"/>
    <property type="molecule type" value="Genomic_DNA"/>
</dbReference>
<dbReference type="EMBL" id="AF399547">
    <property type="protein sequence ID" value="AAK95032.1"/>
    <property type="molecule type" value="Genomic_DNA"/>
</dbReference>
<dbReference type="EMBL" id="BK004446">
    <property type="protein sequence ID" value="DAA04844.1"/>
    <property type="molecule type" value="Genomic_DNA"/>
</dbReference>
<dbReference type="CCDS" id="CCDS6844.1"/>
<dbReference type="RefSeq" id="NP_036495.1">
    <property type="nucleotide sequence ID" value="NM_012363.1"/>
</dbReference>
<dbReference type="SMR" id="Q8NGS0"/>
<dbReference type="BioGRID" id="126530">
    <property type="interactions" value="45"/>
</dbReference>
<dbReference type="FunCoup" id="Q8NGS0">
    <property type="interactions" value="485"/>
</dbReference>
<dbReference type="IntAct" id="Q8NGS0">
    <property type="interactions" value="1"/>
</dbReference>
<dbReference type="STRING" id="9606.ENSP00000306974"/>
<dbReference type="GlyCosmos" id="Q8NGS0">
    <property type="glycosylation" value="1 site, No reported glycans"/>
</dbReference>
<dbReference type="GlyGen" id="Q8NGS0">
    <property type="glycosylation" value="1 site"/>
</dbReference>
<dbReference type="BioMuta" id="OR1N1"/>
<dbReference type="DMDM" id="38372759"/>
<dbReference type="MassIVE" id="Q8NGS0"/>
<dbReference type="PaxDb" id="9606-ENSP00000306974"/>
<dbReference type="ProteomicsDB" id="73587"/>
<dbReference type="Antibodypedia" id="57807">
    <property type="antibodies" value="102 antibodies from 22 providers"/>
</dbReference>
<dbReference type="DNASU" id="138883"/>
<dbReference type="Ensembl" id="ENST00000304880.2">
    <property type="protein sequence ID" value="ENSP00000306974.2"/>
    <property type="gene ID" value="ENSG00000171505.6"/>
</dbReference>
<dbReference type="GeneID" id="138883"/>
<dbReference type="KEGG" id="hsa:138883"/>
<dbReference type="MANE-Select" id="ENST00000304880.2">
    <property type="protein sequence ID" value="ENSP00000306974.2"/>
    <property type="RefSeq nucleotide sequence ID" value="NM_012363.1"/>
    <property type="RefSeq protein sequence ID" value="NP_036495.1"/>
</dbReference>
<dbReference type="UCSC" id="uc004bmn.1">
    <property type="organism name" value="human"/>
</dbReference>
<dbReference type="AGR" id="HGNC:8221"/>
<dbReference type="CTD" id="138883"/>
<dbReference type="GeneCards" id="OR1N1"/>
<dbReference type="HGNC" id="HGNC:8221">
    <property type="gene designation" value="OR1N1"/>
</dbReference>
<dbReference type="HPA" id="ENSG00000171505">
    <property type="expression patterns" value="Not detected"/>
</dbReference>
<dbReference type="neXtProt" id="NX_Q8NGS0"/>
<dbReference type="OpenTargets" id="ENSG00000171505"/>
<dbReference type="PharmGKB" id="PA32090"/>
<dbReference type="VEuPathDB" id="HostDB:ENSG00000171505"/>
<dbReference type="eggNOG" id="ENOG502T9KE">
    <property type="taxonomic scope" value="Eukaryota"/>
</dbReference>
<dbReference type="GeneTree" id="ENSGT00940000163451"/>
<dbReference type="HOGENOM" id="CLU_012526_5_5_1"/>
<dbReference type="InParanoid" id="Q8NGS0"/>
<dbReference type="OMA" id="CWVLTHT"/>
<dbReference type="OrthoDB" id="5964498at2759"/>
<dbReference type="PAN-GO" id="Q8NGS0">
    <property type="GO annotations" value="3 GO annotations based on evolutionary models"/>
</dbReference>
<dbReference type="PhylomeDB" id="Q8NGS0"/>
<dbReference type="TreeFam" id="TF337210"/>
<dbReference type="PathwayCommons" id="Q8NGS0"/>
<dbReference type="Reactome" id="R-HSA-9752946">
    <property type="pathway name" value="Expression and translocation of olfactory receptors"/>
</dbReference>
<dbReference type="BioGRID-ORCS" id="138883">
    <property type="hits" value="12 hits in 753 CRISPR screens"/>
</dbReference>
<dbReference type="GeneWiki" id="OR1N1"/>
<dbReference type="GenomeRNAi" id="138883"/>
<dbReference type="Pharos" id="Q8NGS0">
    <property type="development level" value="Tdark"/>
</dbReference>
<dbReference type="PRO" id="PR:Q8NGS0"/>
<dbReference type="Proteomes" id="UP000005640">
    <property type="component" value="Chromosome 9"/>
</dbReference>
<dbReference type="RNAct" id="Q8NGS0">
    <property type="molecule type" value="protein"/>
</dbReference>
<dbReference type="Bgee" id="ENSG00000171505">
    <property type="expression patterns" value="Expressed in male germ line stem cell (sensu Vertebrata) in testis and 8 other cell types or tissues"/>
</dbReference>
<dbReference type="ExpressionAtlas" id="Q8NGS0">
    <property type="expression patterns" value="baseline and differential"/>
</dbReference>
<dbReference type="GO" id="GO:0005886">
    <property type="term" value="C:plasma membrane"/>
    <property type="evidence" value="ECO:0000318"/>
    <property type="project" value="GO_Central"/>
</dbReference>
<dbReference type="GO" id="GO:0004930">
    <property type="term" value="F:G protein-coupled receptor activity"/>
    <property type="evidence" value="ECO:0007669"/>
    <property type="project" value="UniProtKB-KW"/>
</dbReference>
<dbReference type="GO" id="GO:0004984">
    <property type="term" value="F:olfactory receptor activity"/>
    <property type="evidence" value="ECO:0000318"/>
    <property type="project" value="GO_Central"/>
</dbReference>
<dbReference type="GO" id="GO:0007165">
    <property type="term" value="P:signal transduction"/>
    <property type="evidence" value="ECO:0000318"/>
    <property type="project" value="GO_Central"/>
</dbReference>
<dbReference type="CDD" id="cd15918">
    <property type="entry name" value="7tmA_OR1_7-like"/>
    <property type="match status" value="1"/>
</dbReference>
<dbReference type="FunFam" id="1.20.1070.10:FF:000009">
    <property type="entry name" value="Olfactory receptor"/>
    <property type="match status" value="1"/>
</dbReference>
<dbReference type="Gene3D" id="1.20.1070.10">
    <property type="entry name" value="Rhodopsin 7-helix transmembrane proteins"/>
    <property type="match status" value="1"/>
</dbReference>
<dbReference type="InterPro" id="IPR000276">
    <property type="entry name" value="GPCR_Rhodpsn"/>
</dbReference>
<dbReference type="InterPro" id="IPR017452">
    <property type="entry name" value="GPCR_Rhodpsn_7TM"/>
</dbReference>
<dbReference type="InterPro" id="IPR000725">
    <property type="entry name" value="Olfact_rcpt"/>
</dbReference>
<dbReference type="PANTHER" id="PTHR48001">
    <property type="entry name" value="OLFACTORY RECEPTOR"/>
    <property type="match status" value="1"/>
</dbReference>
<dbReference type="Pfam" id="PF13853">
    <property type="entry name" value="7tm_4"/>
    <property type="match status" value="1"/>
</dbReference>
<dbReference type="PRINTS" id="PR00237">
    <property type="entry name" value="GPCRRHODOPSN"/>
</dbReference>
<dbReference type="PRINTS" id="PR00245">
    <property type="entry name" value="OLFACTORYR"/>
</dbReference>
<dbReference type="SUPFAM" id="SSF81321">
    <property type="entry name" value="Family A G protein-coupled receptor-like"/>
    <property type="match status" value="1"/>
</dbReference>
<dbReference type="PROSITE" id="PS00237">
    <property type="entry name" value="G_PROTEIN_RECEP_F1_1"/>
    <property type="match status" value="1"/>
</dbReference>
<dbReference type="PROSITE" id="PS50262">
    <property type="entry name" value="G_PROTEIN_RECEP_F1_2"/>
    <property type="match status" value="1"/>
</dbReference>
<accession>Q8NGS0</accession>
<accession>A3KFM1</accession>
<accession>O43870</accession>
<accession>Q6IF16</accession>
<accession>Q96R93</accession>
<keyword id="KW-1003">Cell membrane</keyword>
<keyword id="KW-1015">Disulfide bond</keyword>
<keyword id="KW-0297">G-protein coupled receptor</keyword>
<keyword id="KW-0325">Glycoprotein</keyword>
<keyword id="KW-0472">Membrane</keyword>
<keyword id="KW-0552">Olfaction</keyword>
<keyword id="KW-0675">Receptor</keyword>
<keyword id="KW-1185">Reference proteome</keyword>
<keyword id="KW-0716">Sensory transduction</keyword>
<keyword id="KW-0807">Transducer</keyword>
<keyword id="KW-0812">Transmembrane</keyword>
<keyword id="KW-1133">Transmembrane helix</keyword>
<reference key="1">
    <citation type="submission" date="2001-07" db="EMBL/GenBank/DDBJ databases">
        <title>Genome-wide discovery and analysis of human seven transmembrane helix receptor genes.</title>
        <authorList>
            <person name="Suwa M."/>
            <person name="Sato T."/>
            <person name="Okouchi I."/>
            <person name="Arita M."/>
            <person name="Futami K."/>
            <person name="Matsumoto S."/>
            <person name="Tsutsumi S."/>
            <person name="Aburatani H."/>
            <person name="Asai K."/>
            <person name="Akiyama Y."/>
        </authorList>
    </citation>
    <scope>NUCLEOTIDE SEQUENCE [GENOMIC DNA]</scope>
</reference>
<reference key="2">
    <citation type="journal article" date="2004" name="Nature">
        <title>DNA sequence and analysis of human chromosome 9.</title>
        <authorList>
            <person name="Humphray S.J."/>
            <person name="Oliver K."/>
            <person name="Hunt A.R."/>
            <person name="Plumb R.W."/>
            <person name="Loveland J.E."/>
            <person name="Howe K.L."/>
            <person name="Andrews T.D."/>
            <person name="Searle S."/>
            <person name="Hunt S.E."/>
            <person name="Scott C.E."/>
            <person name="Jones M.C."/>
            <person name="Ainscough R."/>
            <person name="Almeida J.P."/>
            <person name="Ambrose K.D."/>
            <person name="Ashwell R.I.S."/>
            <person name="Babbage A.K."/>
            <person name="Babbage S."/>
            <person name="Bagguley C.L."/>
            <person name="Bailey J."/>
            <person name="Banerjee R."/>
            <person name="Barker D.J."/>
            <person name="Barlow K.F."/>
            <person name="Bates K."/>
            <person name="Beasley H."/>
            <person name="Beasley O."/>
            <person name="Bird C.P."/>
            <person name="Bray-Allen S."/>
            <person name="Brown A.J."/>
            <person name="Brown J.Y."/>
            <person name="Burford D."/>
            <person name="Burrill W."/>
            <person name="Burton J."/>
            <person name="Carder C."/>
            <person name="Carter N.P."/>
            <person name="Chapman J.C."/>
            <person name="Chen Y."/>
            <person name="Clarke G."/>
            <person name="Clark S.Y."/>
            <person name="Clee C.M."/>
            <person name="Clegg S."/>
            <person name="Collier R.E."/>
            <person name="Corby N."/>
            <person name="Crosier M."/>
            <person name="Cummings A.T."/>
            <person name="Davies J."/>
            <person name="Dhami P."/>
            <person name="Dunn M."/>
            <person name="Dutta I."/>
            <person name="Dyer L.W."/>
            <person name="Earthrowl M.E."/>
            <person name="Faulkner L."/>
            <person name="Fleming C.J."/>
            <person name="Frankish A."/>
            <person name="Frankland J.A."/>
            <person name="French L."/>
            <person name="Fricker D.G."/>
            <person name="Garner P."/>
            <person name="Garnett J."/>
            <person name="Ghori J."/>
            <person name="Gilbert J.G.R."/>
            <person name="Glison C."/>
            <person name="Grafham D.V."/>
            <person name="Gribble S."/>
            <person name="Griffiths C."/>
            <person name="Griffiths-Jones S."/>
            <person name="Grocock R."/>
            <person name="Guy J."/>
            <person name="Hall R.E."/>
            <person name="Hammond S."/>
            <person name="Harley J.L."/>
            <person name="Harrison E.S.I."/>
            <person name="Hart E.A."/>
            <person name="Heath P.D."/>
            <person name="Henderson C.D."/>
            <person name="Hopkins B.L."/>
            <person name="Howard P.J."/>
            <person name="Howden P.J."/>
            <person name="Huckle E."/>
            <person name="Johnson C."/>
            <person name="Johnson D."/>
            <person name="Joy A.A."/>
            <person name="Kay M."/>
            <person name="Keenan S."/>
            <person name="Kershaw J.K."/>
            <person name="Kimberley A.M."/>
            <person name="King A."/>
            <person name="Knights A."/>
            <person name="Laird G.K."/>
            <person name="Langford C."/>
            <person name="Lawlor S."/>
            <person name="Leongamornlert D.A."/>
            <person name="Leversha M."/>
            <person name="Lloyd C."/>
            <person name="Lloyd D.M."/>
            <person name="Lovell J."/>
            <person name="Martin S."/>
            <person name="Mashreghi-Mohammadi M."/>
            <person name="Matthews L."/>
            <person name="McLaren S."/>
            <person name="McLay K.E."/>
            <person name="McMurray A."/>
            <person name="Milne S."/>
            <person name="Nickerson T."/>
            <person name="Nisbett J."/>
            <person name="Nordsiek G."/>
            <person name="Pearce A.V."/>
            <person name="Peck A.I."/>
            <person name="Porter K.M."/>
            <person name="Pandian R."/>
            <person name="Pelan S."/>
            <person name="Phillimore B."/>
            <person name="Povey S."/>
            <person name="Ramsey Y."/>
            <person name="Rand V."/>
            <person name="Scharfe M."/>
            <person name="Sehra H.K."/>
            <person name="Shownkeen R."/>
            <person name="Sims S.K."/>
            <person name="Skuce C.D."/>
            <person name="Smith M."/>
            <person name="Steward C.A."/>
            <person name="Swarbreck D."/>
            <person name="Sycamore N."/>
            <person name="Tester J."/>
            <person name="Thorpe A."/>
            <person name="Tracey A."/>
            <person name="Tromans A."/>
            <person name="Thomas D.W."/>
            <person name="Wall M."/>
            <person name="Wallis J.M."/>
            <person name="West A.P."/>
            <person name="Whitehead S.L."/>
            <person name="Willey D.L."/>
            <person name="Williams S.A."/>
            <person name="Wilming L."/>
            <person name="Wray P.W."/>
            <person name="Young L."/>
            <person name="Ashurst J.L."/>
            <person name="Coulson A."/>
            <person name="Blocker H."/>
            <person name="Durbin R.M."/>
            <person name="Sulston J.E."/>
            <person name="Hubbard T."/>
            <person name="Jackson M.J."/>
            <person name="Bentley D.R."/>
            <person name="Beck S."/>
            <person name="Rogers J."/>
            <person name="Dunham I."/>
        </authorList>
    </citation>
    <scope>NUCLEOTIDE SEQUENCE [LARGE SCALE GENOMIC DNA]</scope>
</reference>
<reference key="3">
    <citation type="submission" date="2005-07" db="EMBL/GenBank/DDBJ databases">
        <authorList>
            <person name="Mural R.J."/>
            <person name="Istrail S."/>
            <person name="Sutton G.G."/>
            <person name="Florea L."/>
            <person name="Halpern A.L."/>
            <person name="Mobarry C.M."/>
            <person name="Lippert R."/>
            <person name="Walenz B."/>
            <person name="Shatkay H."/>
            <person name="Dew I."/>
            <person name="Miller J.R."/>
            <person name="Flanigan M.J."/>
            <person name="Edwards N.J."/>
            <person name="Bolanos R."/>
            <person name="Fasulo D."/>
            <person name="Halldorsson B.V."/>
            <person name="Hannenhalli S."/>
            <person name="Turner R."/>
            <person name="Yooseph S."/>
            <person name="Lu F."/>
            <person name="Nusskern D.R."/>
            <person name="Shue B.C."/>
            <person name="Zheng X.H."/>
            <person name="Zhong F."/>
            <person name="Delcher A.L."/>
            <person name="Huson D.H."/>
            <person name="Kravitz S.A."/>
            <person name="Mouchard L."/>
            <person name="Reinert K."/>
            <person name="Remington K.A."/>
            <person name="Clark A.G."/>
            <person name="Waterman M.S."/>
            <person name="Eichler E.E."/>
            <person name="Adams M.D."/>
            <person name="Hunkapiller M.W."/>
            <person name="Myers E.W."/>
            <person name="Venter J.C."/>
        </authorList>
    </citation>
    <scope>NUCLEOTIDE SEQUENCE [LARGE SCALE GENOMIC DNA]</scope>
</reference>
<reference key="4">
    <citation type="journal article" date="1998" name="Nat. Genet.">
        <title>Distribution of olfactory receptor genes in the human genome.</title>
        <authorList>
            <person name="Rouquier S."/>
            <person name="Taviaux S."/>
            <person name="Trask B.J."/>
            <person name="Brand-Arpon V."/>
            <person name="Van den Engh G."/>
            <person name="Demaille J.G."/>
            <person name="Giorgi D."/>
        </authorList>
    </citation>
    <scope>NUCLEOTIDE SEQUENCE [GENOMIC DNA] OF 66-281</scope>
</reference>
<reference key="5">
    <citation type="journal article" date="2002" name="Genomics">
        <title>DEFOG: a practical scheme for deciphering families of genes.</title>
        <authorList>
            <person name="Fuchs T."/>
            <person name="Malecova B."/>
            <person name="Linhart C."/>
            <person name="Sharan R."/>
            <person name="Khen M."/>
            <person name="Herwig R."/>
            <person name="Shmulevich D."/>
            <person name="Elkon R."/>
            <person name="Steinfath M."/>
            <person name="O'Brien J.K."/>
            <person name="Radelof U."/>
            <person name="Lehrach H."/>
            <person name="Lancet D."/>
            <person name="Shamir R."/>
        </authorList>
    </citation>
    <scope>NUCLEOTIDE SEQUENCE [GENOMIC DNA] OF 66-281</scope>
</reference>
<reference key="6">
    <citation type="journal article" date="2004" name="Proc. Natl. Acad. Sci. U.S.A.">
        <title>The human olfactory receptor gene family.</title>
        <authorList>
            <person name="Malnic B."/>
            <person name="Godfrey P.A."/>
            <person name="Buck L.B."/>
        </authorList>
    </citation>
    <scope>IDENTIFICATION</scope>
</reference>
<reference key="7">
    <citation type="journal article" date="2004" name="Proc. Natl. Acad. Sci. U.S.A.">
        <authorList>
            <person name="Malnic B."/>
            <person name="Godfrey P.A."/>
            <person name="Buck L.B."/>
        </authorList>
    </citation>
    <scope>ERRATUM OF PUBMED:14983052</scope>
</reference>
<reference key="8">
    <citation type="journal article" date="2006" name="Science">
        <title>The consensus coding sequences of human breast and colorectal cancers.</title>
        <authorList>
            <person name="Sjoeblom T."/>
            <person name="Jones S."/>
            <person name="Wood L.D."/>
            <person name="Parsons D.W."/>
            <person name="Lin J."/>
            <person name="Barber T.D."/>
            <person name="Mandelker D."/>
            <person name="Leary R.J."/>
            <person name="Ptak J."/>
            <person name="Silliman N."/>
            <person name="Szabo S."/>
            <person name="Buckhaults P."/>
            <person name="Farrell C."/>
            <person name="Meeh P."/>
            <person name="Markowitz S.D."/>
            <person name="Willis J."/>
            <person name="Dawson D."/>
            <person name="Willson J.K.V."/>
            <person name="Gazdar A.F."/>
            <person name="Hartigan J."/>
            <person name="Wu L."/>
            <person name="Liu C."/>
            <person name="Parmigiani G."/>
            <person name="Park B.H."/>
            <person name="Bachman K.E."/>
            <person name="Papadopoulos N."/>
            <person name="Vogelstein B."/>
            <person name="Kinzler K.W."/>
            <person name="Velculescu V.E."/>
        </authorList>
    </citation>
    <scope>VARIANT [LARGE SCALE ANALYSIS] ASN-190</scope>
</reference>
<comment type="function">
    <text evidence="4">Odorant receptor.</text>
</comment>
<comment type="subcellular location">
    <subcellularLocation>
        <location>Cell membrane</location>
        <topology>Multi-pass membrane protein</topology>
    </subcellularLocation>
</comment>
<comment type="similarity">
    <text evidence="2">Belongs to the G-protein coupled receptor 1 family.</text>
</comment>
<comment type="online information" name="Human Olfactory Receptor Data Exploratorium (HORDE)">
    <link uri="http://genome.weizmann.ac.il/horde/card/index/symbol:OR1N1"/>
</comment>
<protein>
    <recommendedName>
        <fullName>Olfactory receptor 1N1</fullName>
    </recommendedName>
    <alternativeName>
        <fullName>Olfactory receptor 1-26</fullName>
        <shortName>OR1-26</shortName>
    </alternativeName>
    <alternativeName>
        <fullName>Olfactory receptor 1N3</fullName>
    </alternativeName>
    <alternativeName>
        <fullName>Olfactory receptor OR9-22</fullName>
    </alternativeName>
</protein>
<organism>
    <name type="scientific">Homo sapiens</name>
    <name type="common">Human</name>
    <dbReference type="NCBI Taxonomy" id="9606"/>
    <lineage>
        <taxon>Eukaryota</taxon>
        <taxon>Metazoa</taxon>
        <taxon>Chordata</taxon>
        <taxon>Craniata</taxon>
        <taxon>Vertebrata</taxon>
        <taxon>Euteleostomi</taxon>
        <taxon>Mammalia</taxon>
        <taxon>Eutheria</taxon>
        <taxon>Euarchontoglires</taxon>
        <taxon>Primates</taxon>
        <taxon>Haplorrhini</taxon>
        <taxon>Catarrhini</taxon>
        <taxon>Hominidae</taxon>
        <taxon>Homo</taxon>
    </lineage>
</organism>
<gene>
    <name type="primary">OR1N1</name>
    <name type="synonym">OR1N3</name>
</gene>
<evidence type="ECO:0000255" key="1"/>
<evidence type="ECO:0000255" key="2">
    <source>
        <dbReference type="PROSITE-ProRule" id="PRU00521"/>
    </source>
</evidence>
<evidence type="ECO:0000269" key="3">
    <source>
    </source>
</evidence>
<evidence type="ECO:0000305" key="4"/>
<feature type="chain" id="PRO_0000150448" description="Olfactory receptor 1N1">
    <location>
        <begin position="1"/>
        <end position="311"/>
    </location>
</feature>
<feature type="topological domain" description="Extracellular" evidence="1">
    <location>
        <begin position="1"/>
        <end position="23"/>
    </location>
</feature>
<feature type="transmembrane region" description="Helical; Name=1" evidence="1">
    <location>
        <begin position="24"/>
        <end position="47"/>
    </location>
</feature>
<feature type="topological domain" description="Cytoplasmic" evidence="1">
    <location>
        <begin position="48"/>
        <end position="55"/>
    </location>
</feature>
<feature type="transmembrane region" description="Helical; Name=2" evidence="1">
    <location>
        <begin position="56"/>
        <end position="77"/>
    </location>
</feature>
<feature type="topological domain" description="Extracellular" evidence="1">
    <location>
        <begin position="78"/>
        <end position="98"/>
    </location>
</feature>
<feature type="transmembrane region" description="Helical; Name=3" evidence="1">
    <location>
        <begin position="99"/>
        <end position="118"/>
    </location>
</feature>
<feature type="topological domain" description="Cytoplasmic" evidence="1">
    <location>
        <begin position="119"/>
        <end position="137"/>
    </location>
</feature>
<feature type="transmembrane region" description="Helical; Name=4" evidence="1">
    <location>
        <begin position="138"/>
        <end position="156"/>
    </location>
</feature>
<feature type="topological domain" description="Extracellular" evidence="1">
    <location>
        <begin position="157"/>
        <end position="194"/>
    </location>
</feature>
<feature type="transmembrane region" description="Helical; Name=5" evidence="1">
    <location>
        <begin position="195"/>
        <end position="217"/>
    </location>
</feature>
<feature type="topological domain" description="Cytoplasmic" evidence="1">
    <location>
        <begin position="218"/>
        <end position="234"/>
    </location>
</feature>
<feature type="transmembrane region" description="Helical; Name=6" evidence="1">
    <location>
        <begin position="235"/>
        <end position="257"/>
    </location>
</feature>
<feature type="topological domain" description="Extracellular" evidence="1">
    <location>
        <begin position="258"/>
        <end position="270"/>
    </location>
</feature>
<feature type="transmembrane region" description="Helical; Name=7" evidence="1">
    <location>
        <begin position="271"/>
        <end position="290"/>
    </location>
</feature>
<feature type="topological domain" description="Cytoplasmic" evidence="1">
    <location>
        <begin position="291"/>
        <end position="311"/>
    </location>
</feature>
<feature type="glycosylation site" description="N-linked (GlcNAc...) asparagine" evidence="1">
    <location>
        <position position="3"/>
    </location>
</feature>
<feature type="disulfide bond" evidence="2">
    <location>
        <begin position="95"/>
        <end position="187"/>
    </location>
</feature>
<feature type="sequence variant" id="VAR_024089" description="In dbSNP:rs10818708.">
    <original>P</original>
    <variation>S</variation>
    <location>
        <position position="18"/>
    </location>
</feature>
<feature type="sequence variant" id="VAR_036208" description="In a breast cancer sample; somatic mutation." evidence="3">
    <original>T</original>
    <variation>N</variation>
    <location>
        <position position="190"/>
    </location>
</feature>
<feature type="sequence variant" id="VAR_062011" description="In dbSNP:rs58226717.">
    <original>R</original>
    <variation>Q</variation>
    <location>
        <position position="227"/>
    </location>
</feature>
<feature type="sequence conflict" description="In Ref. 4; AAC39612." evidence="4" ref="4">
    <original>S</original>
    <variation>T</variation>
    <location>
        <position position="91"/>
    </location>
</feature>